<name>ATPL_CYAP4</name>
<protein>
    <recommendedName>
        <fullName evidence="1">ATP synthase subunit c</fullName>
    </recommendedName>
    <alternativeName>
        <fullName evidence="1">ATP synthase F(0) sector subunit c</fullName>
    </alternativeName>
    <alternativeName>
        <fullName evidence="1">F-type ATPase subunit c</fullName>
        <shortName evidence="1">F-ATPase subunit c</shortName>
    </alternativeName>
    <alternativeName>
        <fullName evidence="1">Lipid-binding protein</fullName>
    </alternativeName>
</protein>
<feature type="chain" id="PRO_1000184353" description="ATP synthase subunit c">
    <location>
        <begin position="1"/>
        <end position="82"/>
    </location>
</feature>
<feature type="transmembrane region" description="Helical" evidence="1">
    <location>
        <begin position="5"/>
        <end position="25"/>
    </location>
</feature>
<feature type="transmembrane region" description="Helical" evidence="1">
    <location>
        <begin position="57"/>
        <end position="77"/>
    </location>
</feature>
<feature type="site" description="Reversibly protonated during proton transport" evidence="1">
    <location>
        <position position="61"/>
    </location>
</feature>
<proteinExistence type="inferred from homology"/>
<evidence type="ECO:0000255" key="1">
    <source>
        <dbReference type="HAMAP-Rule" id="MF_01396"/>
    </source>
</evidence>
<comment type="function">
    <text evidence="1">F(1)F(0) ATP synthase produces ATP from ADP in the presence of a proton or sodium gradient. F-type ATPases consist of two structural domains, F(1) containing the extramembraneous catalytic core and F(0) containing the membrane proton channel, linked together by a central stalk and a peripheral stalk. During catalysis, ATP synthesis in the catalytic domain of F(1) is coupled via a rotary mechanism of the central stalk subunits to proton translocation.</text>
</comment>
<comment type="function">
    <text evidence="1">Key component of the F(0) channel; it plays a direct role in translocation across the membrane. A homomeric c-ring of between 10-14 subunits forms the central stalk rotor element with the F(1) delta and epsilon subunits.</text>
</comment>
<comment type="subunit">
    <text evidence="1">F-type ATPases have 2 components, F(1) - the catalytic core - and F(0) - the membrane proton channel. F(1) has five subunits: alpha(3), beta(3), gamma(1), delta(1), epsilon(1). F(0) has four main subunits: a(1), b(1), b'(1) and c(10-14). The alpha and beta chains form an alternating ring which encloses part of the gamma chain. F(1) is attached to F(0) by a central stalk formed by the gamma and epsilon chains, while a peripheral stalk is formed by the delta, b and b' chains.</text>
</comment>
<comment type="subcellular location">
    <subcellularLocation>
        <location evidence="1">Cellular thylakoid membrane</location>
        <topology evidence="1">Multi-pass membrane protein</topology>
    </subcellularLocation>
</comment>
<comment type="similarity">
    <text evidence="1">Belongs to the ATPase C chain family.</text>
</comment>
<organism>
    <name type="scientific">Cyanothece sp. (strain PCC 7425 / ATCC 29141)</name>
    <dbReference type="NCBI Taxonomy" id="395961"/>
    <lineage>
        <taxon>Bacteria</taxon>
        <taxon>Bacillati</taxon>
        <taxon>Cyanobacteriota</taxon>
        <taxon>Cyanophyceae</taxon>
        <taxon>Gomontiellales</taxon>
        <taxon>Cyanothecaceae</taxon>
        <taxon>Cyanothece</taxon>
    </lineage>
</organism>
<reference key="1">
    <citation type="journal article" date="2011" name="MBio">
        <title>Novel metabolic attributes of the genus Cyanothece, comprising a group of unicellular nitrogen-fixing Cyanobacteria.</title>
        <authorList>
            <person name="Bandyopadhyay A."/>
            <person name="Elvitigala T."/>
            <person name="Welsh E."/>
            <person name="Stockel J."/>
            <person name="Liberton M."/>
            <person name="Min H."/>
            <person name="Sherman L.A."/>
            <person name="Pakrasi H.B."/>
        </authorList>
    </citation>
    <scope>NUCLEOTIDE SEQUENCE [LARGE SCALE GENOMIC DNA]</scope>
    <source>
        <strain>PCC 7425 / ATCC 29141</strain>
    </source>
</reference>
<accession>B8HPJ7</accession>
<keyword id="KW-0066">ATP synthesis</keyword>
<keyword id="KW-0138">CF(0)</keyword>
<keyword id="KW-0375">Hydrogen ion transport</keyword>
<keyword id="KW-0406">Ion transport</keyword>
<keyword id="KW-0446">Lipid-binding</keyword>
<keyword id="KW-0472">Membrane</keyword>
<keyword id="KW-0793">Thylakoid</keyword>
<keyword id="KW-0812">Transmembrane</keyword>
<keyword id="KW-1133">Transmembrane helix</keyword>
<keyword id="KW-0813">Transport</keyword>
<gene>
    <name evidence="1" type="primary">atpE</name>
    <name evidence="1" type="synonym">atpH</name>
    <name type="ordered locus">Cyan7425_1488</name>
</gene>
<sequence>MDPQIASASVLAAALAIGLAAIGPGIGQGNASGQAVEGIARQPEAEGKIRGTLLLTLAFMESLTIYGLVIALVLLFANPFAG</sequence>
<dbReference type="EMBL" id="CP001344">
    <property type="protein sequence ID" value="ACL43858.1"/>
    <property type="molecule type" value="Genomic_DNA"/>
</dbReference>
<dbReference type="SMR" id="B8HPJ7"/>
<dbReference type="STRING" id="395961.Cyan7425_1488"/>
<dbReference type="KEGG" id="cyn:Cyan7425_1488"/>
<dbReference type="eggNOG" id="COG0636">
    <property type="taxonomic scope" value="Bacteria"/>
</dbReference>
<dbReference type="HOGENOM" id="CLU_148047_2_0_3"/>
<dbReference type="OrthoDB" id="9810379at2"/>
<dbReference type="GO" id="GO:0031676">
    <property type="term" value="C:plasma membrane-derived thylakoid membrane"/>
    <property type="evidence" value="ECO:0007669"/>
    <property type="project" value="UniProtKB-SubCell"/>
</dbReference>
<dbReference type="GO" id="GO:0045259">
    <property type="term" value="C:proton-transporting ATP synthase complex"/>
    <property type="evidence" value="ECO:0007669"/>
    <property type="project" value="UniProtKB-KW"/>
</dbReference>
<dbReference type="GO" id="GO:0033177">
    <property type="term" value="C:proton-transporting two-sector ATPase complex, proton-transporting domain"/>
    <property type="evidence" value="ECO:0007669"/>
    <property type="project" value="InterPro"/>
</dbReference>
<dbReference type="GO" id="GO:0008289">
    <property type="term" value="F:lipid binding"/>
    <property type="evidence" value="ECO:0007669"/>
    <property type="project" value="UniProtKB-KW"/>
</dbReference>
<dbReference type="GO" id="GO:0046933">
    <property type="term" value="F:proton-transporting ATP synthase activity, rotational mechanism"/>
    <property type="evidence" value="ECO:0007669"/>
    <property type="project" value="UniProtKB-UniRule"/>
</dbReference>
<dbReference type="CDD" id="cd18183">
    <property type="entry name" value="ATP-synt_Fo_c_ATPH"/>
    <property type="match status" value="1"/>
</dbReference>
<dbReference type="FunFam" id="1.20.20.10:FF:000001">
    <property type="entry name" value="ATP synthase subunit c, chloroplastic"/>
    <property type="match status" value="1"/>
</dbReference>
<dbReference type="Gene3D" id="1.20.20.10">
    <property type="entry name" value="F1F0 ATP synthase subunit C"/>
    <property type="match status" value="1"/>
</dbReference>
<dbReference type="HAMAP" id="MF_01396">
    <property type="entry name" value="ATP_synth_c_bact"/>
    <property type="match status" value="1"/>
</dbReference>
<dbReference type="InterPro" id="IPR005953">
    <property type="entry name" value="ATP_synth_csu_bac/chlpt"/>
</dbReference>
<dbReference type="InterPro" id="IPR000454">
    <property type="entry name" value="ATP_synth_F0_csu"/>
</dbReference>
<dbReference type="InterPro" id="IPR020537">
    <property type="entry name" value="ATP_synth_F0_csu_DDCD_BS"/>
</dbReference>
<dbReference type="InterPro" id="IPR038662">
    <property type="entry name" value="ATP_synth_F0_csu_sf"/>
</dbReference>
<dbReference type="InterPro" id="IPR002379">
    <property type="entry name" value="ATPase_proteolipid_c-like_dom"/>
</dbReference>
<dbReference type="InterPro" id="IPR035921">
    <property type="entry name" value="F/V-ATP_Csub_sf"/>
</dbReference>
<dbReference type="NCBIfam" id="TIGR01260">
    <property type="entry name" value="ATP_synt_c"/>
    <property type="match status" value="1"/>
</dbReference>
<dbReference type="NCBIfam" id="NF005608">
    <property type="entry name" value="PRK07354.1"/>
    <property type="match status" value="1"/>
</dbReference>
<dbReference type="PANTHER" id="PTHR10031">
    <property type="entry name" value="ATP SYNTHASE LIPID-BINDING PROTEIN, MITOCHONDRIAL"/>
    <property type="match status" value="1"/>
</dbReference>
<dbReference type="PANTHER" id="PTHR10031:SF0">
    <property type="entry name" value="ATPASE PROTEIN 9"/>
    <property type="match status" value="1"/>
</dbReference>
<dbReference type="Pfam" id="PF00137">
    <property type="entry name" value="ATP-synt_C"/>
    <property type="match status" value="1"/>
</dbReference>
<dbReference type="PRINTS" id="PR00124">
    <property type="entry name" value="ATPASEC"/>
</dbReference>
<dbReference type="SUPFAM" id="SSF81333">
    <property type="entry name" value="F1F0 ATP synthase subunit C"/>
    <property type="match status" value="1"/>
</dbReference>
<dbReference type="PROSITE" id="PS00605">
    <property type="entry name" value="ATPASE_C"/>
    <property type="match status" value="1"/>
</dbReference>